<comment type="function">
    <text evidence="1">Part of the Sec protein translocase complex. Interacts with the SecYEG preprotein conducting channel. Has a central role in coupling the hydrolysis of ATP to the transfer of proteins into and across the cell membrane, serving as an ATP-driven molecular motor driving the stepwise translocation of polypeptide chains across the membrane.</text>
</comment>
<comment type="catalytic activity">
    <reaction evidence="1">
        <text>ATP + H2O + cellular proteinSide 1 = ADP + phosphate + cellular proteinSide 2.</text>
        <dbReference type="EC" id="7.4.2.8"/>
    </reaction>
</comment>
<comment type="subunit">
    <text evidence="1">Monomer and homodimer. Part of the essential Sec protein translocation apparatus which comprises SecA, SecYEG and auxiliary proteins SecDF. Other proteins may also be involved.</text>
</comment>
<comment type="subcellular location">
    <subcellularLocation>
        <location evidence="1">Cell membrane</location>
        <topology evidence="1">Peripheral membrane protein</topology>
        <orientation evidence="1">Cytoplasmic side</orientation>
    </subcellularLocation>
    <subcellularLocation>
        <location evidence="1">Cytoplasm</location>
    </subcellularLocation>
    <text evidence="1">Distribution is 50-50.</text>
</comment>
<comment type="similarity">
    <text evidence="1">Belongs to the SecA family.</text>
</comment>
<protein>
    <recommendedName>
        <fullName evidence="1">Protein translocase subunit SecA 2</fullName>
        <ecNumber evidence="1">7.4.2.8</ecNumber>
    </recommendedName>
</protein>
<dbReference type="EC" id="7.4.2.8" evidence="1"/>
<dbReference type="EMBL" id="AP009324">
    <property type="protein sequence ID" value="BAF79516.1"/>
    <property type="molecule type" value="Genomic_DNA"/>
</dbReference>
<dbReference type="RefSeq" id="WP_000680945.1">
    <property type="nucleotide sequence ID" value="NC_009782.1"/>
</dbReference>
<dbReference type="SMR" id="A7X735"/>
<dbReference type="KEGG" id="saw:SAHV_2633"/>
<dbReference type="HOGENOM" id="CLU_005314_3_2_9"/>
<dbReference type="GO" id="GO:0031522">
    <property type="term" value="C:cell envelope Sec protein transport complex"/>
    <property type="evidence" value="ECO:0007669"/>
    <property type="project" value="TreeGrafter"/>
</dbReference>
<dbReference type="GO" id="GO:0005829">
    <property type="term" value="C:cytosol"/>
    <property type="evidence" value="ECO:0007669"/>
    <property type="project" value="TreeGrafter"/>
</dbReference>
<dbReference type="GO" id="GO:0005886">
    <property type="term" value="C:plasma membrane"/>
    <property type="evidence" value="ECO:0007669"/>
    <property type="project" value="UniProtKB-SubCell"/>
</dbReference>
<dbReference type="GO" id="GO:0005524">
    <property type="term" value="F:ATP binding"/>
    <property type="evidence" value="ECO:0007669"/>
    <property type="project" value="UniProtKB-UniRule"/>
</dbReference>
<dbReference type="GO" id="GO:0008564">
    <property type="term" value="F:protein-exporting ATPase activity"/>
    <property type="evidence" value="ECO:0007669"/>
    <property type="project" value="UniProtKB-EC"/>
</dbReference>
<dbReference type="GO" id="GO:0065002">
    <property type="term" value="P:intracellular protein transmembrane transport"/>
    <property type="evidence" value="ECO:0007669"/>
    <property type="project" value="UniProtKB-UniRule"/>
</dbReference>
<dbReference type="GO" id="GO:0017038">
    <property type="term" value="P:protein import"/>
    <property type="evidence" value="ECO:0007669"/>
    <property type="project" value="InterPro"/>
</dbReference>
<dbReference type="GO" id="GO:0006605">
    <property type="term" value="P:protein targeting"/>
    <property type="evidence" value="ECO:0007669"/>
    <property type="project" value="UniProtKB-UniRule"/>
</dbReference>
<dbReference type="GO" id="GO:0043952">
    <property type="term" value="P:protein transport by the Sec complex"/>
    <property type="evidence" value="ECO:0007669"/>
    <property type="project" value="TreeGrafter"/>
</dbReference>
<dbReference type="CDD" id="cd17928">
    <property type="entry name" value="DEXDc_SecA"/>
    <property type="match status" value="1"/>
</dbReference>
<dbReference type="CDD" id="cd18803">
    <property type="entry name" value="SF2_C_secA"/>
    <property type="match status" value="1"/>
</dbReference>
<dbReference type="FunFam" id="3.40.50.300:FF:000429">
    <property type="entry name" value="Preprotein translocase subunit SecA"/>
    <property type="match status" value="1"/>
</dbReference>
<dbReference type="FunFam" id="3.40.50.300:FF:001575">
    <property type="entry name" value="Protein translocase subunit SecA 2"/>
    <property type="match status" value="1"/>
</dbReference>
<dbReference type="Gene3D" id="1.10.3060.10">
    <property type="entry name" value="Helical scaffold and wing domains of SecA"/>
    <property type="match status" value="1"/>
</dbReference>
<dbReference type="Gene3D" id="3.40.50.300">
    <property type="entry name" value="P-loop containing nucleotide triphosphate hydrolases"/>
    <property type="match status" value="2"/>
</dbReference>
<dbReference type="Gene3D" id="3.90.1440.10">
    <property type="entry name" value="SecA, preprotein cross-linking domain"/>
    <property type="match status" value="1"/>
</dbReference>
<dbReference type="HAMAP" id="MF_01382">
    <property type="entry name" value="SecA"/>
    <property type="match status" value="1"/>
</dbReference>
<dbReference type="InterPro" id="IPR014001">
    <property type="entry name" value="Helicase_ATP-bd"/>
</dbReference>
<dbReference type="InterPro" id="IPR001650">
    <property type="entry name" value="Helicase_C-like"/>
</dbReference>
<dbReference type="InterPro" id="IPR027417">
    <property type="entry name" value="P-loop_NTPase"/>
</dbReference>
<dbReference type="InterPro" id="IPR000185">
    <property type="entry name" value="SecA"/>
</dbReference>
<dbReference type="InterPro" id="IPR022490">
    <property type="entry name" value="SecA2"/>
</dbReference>
<dbReference type="InterPro" id="IPR011115">
    <property type="entry name" value="SecA_DEAD"/>
</dbReference>
<dbReference type="InterPro" id="IPR014018">
    <property type="entry name" value="SecA_motor_DEAD"/>
</dbReference>
<dbReference type="InterPro" id="IPR011130">
    <property type="entry name" value="SecA_preprotein_X-link_dom"/>
</dbReference>
<dbReference type="InterPro" id="IPR044722">
    <property type="entry name" value="SecA_SF2_C"/>
</dbReference>
<dbReference type="InterPro" id="IPR011116">
    <property type="entry name" value="SecA_Wing/Scaffold"/>
</dbReference>
<dbReference type="InterPro" id="IPR036266">
    <property type="entry name" value="SecA_Wing/Scaffold_sf"/>
</dbReference>
<dbReference type="InterPro" id="IPR036670">
    <property type="entry name" value="SecA_X-link_sf"/>
</dbReference>
<dbReference type="NCBIfam" id="NF006630">
    <property type="entry name" value="PRK09200.1"/>
    <property type="match status" value="1"/>
</dbReference>
<dbReference type="NCBIfam" id="TIGR03714">
    <property type="entry name" value="secA2"/>
    <property type="match status" value="1"/>
</dbReference>
<dbReference type="PANTHER" id="PTHR30612:SF0">
    <property type="entry name" value="CHLOROPLAST PROTEIN-TRANSPORTING ATPASE"/>
    <property type="match status" value="1"/>
</dbReference>
<dbReference type="PANTHER" id="PTHR30612">
    <property type="entry name" value="SECA INNER MEMBRANE COMPONENT OF SEC PROTEIN SECRETION SYSTEM"/>
    <property type="match status" value="1"/>
</dbReference>
<dbReference type="Pfam" id="PF21090">
    <property type="entry name" value="P-loop_SecA"/>
    <property type="match status" value="1"/>
</dbReference>
<dbReference type="Pfam" id="PF07517">
    <property type="entry name" value="SecA_DEAD"/>
    <property type="match status" value="1"/>
</dbReference>
<dbReference type="Pfam" id="PF01043">
    <property type="entry name" value="SecA_PP_bind"/>
    <property type="match status" value="1"/>
</dbReference>
<dbReference type="Pfam" id="PF07516">
    <property type="entry name" value="SecA_SW"/>
    <property type="match status" value="1"/>
</dbReference>
<dbReference type="PRINTS" id="PR00906">
    <property type="entry name" value="SECA"/>
</dbReference>
<dbReference type="SMART" id="SM00957">
    <property type="entry name" value="SecA_DEAD"/>
    <property type="match status" value="1"/>
</dbReference>
<dbReference type="SMART" id="SM00958">
    <property type="entry name" value="SecA_PP_bind"/>
    <property type="match status" value="1"/>
</dbReference>
<dbReference type="SUPFAM" id="SSF81886">
    <property type="entry name" value="Helical scaffold and wing domains of SecA"/>
    <property type="match status" value="1"/>
</dbReference>
<dbReference type="SUPFAM" id="SSF52540">
    <property type="entry name" value="P-loop containing nucleoside triphosphate hydrolases"/>
    <property type="match status" value="2"/>
</dbReference>
<dbReference type="SUPFAM" id="SSF81767">
    <property type="entry name" value="Pre-protein crosslinking domain of SecA"/>
    <property type="match status" value="1"/>
</dbReference>
<dbReference type="PROSITE" id="PS51196">
    <property type="entry name" value="SECA_MOTOR_DEAD"/>
    <property type="match status" value="1"/>
</dbReference>
<name>SECA2_STAA1</name>
<accession>A7X735</accession>
<organism>
    <name type="scientific">Staphylococcus aureus (strain Mu3 / ATCC 700698)</name>
    <dbReference type="NCBI Taxonomy" id="418127"/>
    <lineage>
        <taxon>Bacteria</taxon>
        <taxon>Bacillati</taxon>
        <taxon>Bacillota</taxon>
        <taxon>Bacilli</taxon>
        <taxon>Bacillales</taxon>
        <taxon>Staphylococcaceae</taxon>
        <taxon>Staphylococcus</taxon>
    </lineage>
</organism>
<proteinExistence type="inferred from homology"/>
<reference key="1">
    <citation type="journal article" date="2008" name="Antimicrob. Agents Chemother.">
        <title>Mutated response regulator graR is responsible for phenotypic conversion of Staphylococcus aureus from heterogeneous vancomycin-intermediate resistance to vancomycin-intermediate resistance.</title>
        <authorList>
            <person name="Neoh H.-M."/>
            <person name="Cui L."/>
            <person name="Yuzawa H."/>
            <person name="Takeuchi F."/>
            <person name="Matsuo M."/>
            <person name="Hiramatsu K."/>
        </authorList>
    </citation>
    <scope>NUCLEOTIDE SEQUENCE [LARGE SCALE GENOMIC DNA]</scope>
    <source>
        <strain>Mu3 / ATCC 700698</strain>
    </source>
</reference>
<gene>
    <name evidence="1" type="primary">secA2</name>
    <name type="ordered locus">SAHV_2633</name>
</gene>
<feature type="chain" id="PRO_0000318426" description="Protein translocase subunit SecA 2">
    <location>
        <begin position="1"/>
        <end position="796"/>
    </location>
</feature>
<feature type="binding site" evidence="1">
    <location>
        <position position="84"/>
    </location>
    <ligand>
        <name>ATP</name>
        <dbReference type="ChEBI" id="CHEBI:30616"/>
    </ligand>
</feature>
<feature type="binding site" evidence="1">
    <location>
        <begin position="102"/>
        <end position="106"/>
    </location>
    <ligand>
        <name>ATP</name>
        <dbReference type="ChEBI" id="CHEBI:30616"/>
    </ligand>
</feature>
<feature type="binding site" evidence="1">
    <location>
        <position position="496"/>
    </location>
    <ligand>
        <name>ATP</name>
        <dbReference type="ChEBI" id="CHEBI:30616"/>
    </ligand>
</feature>
<evidence type="ECO:0000255" key="1">
    <source>
        <dbReference type="HAMAP-Rule" id="MF_01382"/>
    </source>
</evidence>
<sequence length="796" mass="90930">MKHKLDVTINELRLKSIRKIVKRINTWSDEVKSYSDDALKQKTIEFKERLASGVDTLDTLLPEAYAVAREASWRVLGMYPKEVQLIGAIVLHEGNIAEMQTGEGKTLTATMPLYLNALSGKGTYLITTNDYLAKRDFEEMQPLYEWLGLTASLGFVDIVDYEYQKGEKRNIYEHDIIYTTNGRLGFDYLIDNLADSAEGKFLPQLNYGIIDEVDSIILDAAQTPLVISGAPRLQSNLFHIVKEFVDTLIEDVHFKMKKTKKEIWLLNQGIEAAQSYFNVEDLYSEQAMVLVRNINLALRAQYLFESNVDYFVYNGDIVLIDRITGRMLPGTKLQAGLHQAIEAKEGMEVSTDKSVMATITFQNLFKLFESFSGMTATGKLGESEFFDLYSKIVVQAPTDKAIQRIDEPDKVFRSVDEKNIAMIHDIVELHETGRPVLLITRTAEAAEYFSKVLFQMDIPNNLLIAQNVAKEAQMIAEAGQIGSMTVATSMAGRGTDIKLGEGVEALGGLAVIIHEHMENSRVDRQLRGRSGRQGDPGSSCIYISLDDYLVKRWSDSNLAENNQLYSLDAQRLSQSNLFNRKVKQIVVKAQRISEEQGVKAREMANEFEKSISIQRDLVYEERNRVLEIDDAENRDFKALAKDVFEMFVNEEKVLTKSRVVEYIYQNLSFQFNKDVACVNFKDKQAVVTFLLEQFEKQLALNRKNMQSAYYYNIFVQKVFLKAIDSCWLEQVDYLQQLKASVNQRQNGQRNAIFEYHRVALDSFEVMTRNIKKRMVKNICQSMITFDKEGMPVIHFP</sequence>
<keyword id="KW-0067">ATP-binding</keyword>
<keyword id="KW-1003">Cell membrane</keyword>
<keyword id="KW-0963">Cytoplasm</keyword>
<keyword id="KW-0472">Membrane</keyword>
<keyword id="KW-0547">Nucleotide-binding</keyword>
<keyword id="KW-0653">Protein transport</keyword>
<keyword id="KW-1278">Translocase</keyword>
<keyword id="KW-0811">Translocation</keyword>
<keyword id="KW-0813">Transport</keyword>